<organism>
    <name type="scientific">Bacillus subtilis (strain 168)</name>
    <dbReference type="NCBI Taxonomy" id="224308"/>
    <lineage>
        <taxon>Bacteria</taxon>
        <taxon>Bacillati</taxon>
        <taxon>Bacillota</taxon>
        <taxon>Bacilli</taxon>
        <taxon>Bacillales</taxon>
        <taxon>Bacillaceae</taxon>
        <taxon>Bacillus</taxon>
    </lineage>
</organism>
<feature type="chain" id="PRO_0000390390" description="Oligoribonuclease NrnB">
    <location>
        <begin position="1"/>
        <end position="399"/>
    </location>
</feature>
<feature type="mutagenesis site" description="Strong decrease in activity." evidence="1">
    <original>DHH</original>
    <variation>AAA</variation>
    <location>
        <begin position="86"/>
        <end position="88"/>
    </location>
</feature>
<accession>O31824</accession>
<keyword id="KW-0963">Cytoplasm</keyword>
<keyword id="KW-0269">Exonuclease</keyword>
<keyword id="KW-0378">Hydrolase</keyword>
<keyword id="KW-0540">Nuclease</keyword>
<keyword id="KW-1185">Reference proteome</keyword>
<dbReference type="EC" id="3.1.-.-"/>
<dbReference type="EMBL" id="AL009126">
    <property type="protein sequence ID" value="CAB13703.1"/>
    <property type="molecule type" value="Genomic_DNA"/>
</dbReference>
<dbReference type="PIR" id="A69893">
    <property type="entry name" value="A69893"/>
</dbReference>
<dbReference type="RefSeq" id="NP_389702.1">
    <property type="nucleotide sequence ID" value="NC_000964.3"/>
</dbReference>
<dbReference type="RefSeq" id="WP_003245472.1">
    <property type="nucleotide sequence ID" value="NZ_OZ025638.1"/>
</dbReference>
<dbReference type="SMR" id="O31824"/>
<dbReference type="FunCoup" id="O31824">
    <property type="interactions" value="29"/>
</dbReference>
<dbReference type="IntAct" id="O31824">
    <property type="interactions" value="2"/>
</dbReference>
<dbReference type="STRING" id="224308.BSU18200"/>
<dbReference type="PaxDb" id="224308-BSU18200"/>
<dbReference type="EnsemblBacteria" id="CAB13703">
    <property type="protein sequence ID" value="CAB13703"/>
    <property type="gene ID" value="BSU_18200"/>
</dbReference>
<dbReference type="GeneID" id="936020"/>
<dbReference type="KEGG" id="bsu:BSU18200"/>
<dbReference type="PATRIC" id="fig|224308.179.peg.1985"/>
<dbReference type="eggNOG" id="COG2404">
    <property type="taxonomic scope" value="Bacteria"/>
</dbReference>
<dbReference type="InParanoid" id="O31824"/>
<dbReference type="OrthoDB" id="2035301at2"/>
<dbReference type="BioCyc" id="BSUB:BSU18200-MONOMER"/>
<dbReference type="Proteomes" id="UP000001570">
    <property type="component" value="Chromosome"/>
</dbReference>
<dbReference type="GO" id="GO:0005737">
    <property type="term" value="C:cytoplasm"/>
    <property type="evidence" value="ECO:0007669"/>
    <property type="project" value="UniProtKB-SubCell"/>
</dbReference>
<dbReference type="GO" id="GO:0004527">
    <property type="term" value="F:exonuclease activity"/>
    <property type="evidence" value="ECO:0007669"/>
    <property type="project" value="UniProtKB-KW"/>
</dbReference>
<dbReference type="Gene3D" id="3.10.310.30">
    <property type="match status" value="1"/>
</dbReference>
<dbReference type="Gene3D" id="3.90.1640.10">
    <property type="entry name" value="inorganic pyrophosphatase (n-terminal core)"/>
    <property type="match status" value="1"/>
</dbReference>
<dbReference type="InterPro" id="IPR038763">
    <property type="entry name" value="DHH_sf"/>
</dbReference>
<dbReference type="InterPro" id="IPR052968">
    <property type="entry name" value="Nucleotide_metab_enz"/>
</dbReference>
<dbReference type="PANTHER" id="PTHR42146">
    <property type="entry name" value="3',5'-CYCLIC-NUCLEOTIDE PHOSPHODIESTERASE"/>
    <property type="match status" value="1"/>
</dbReference>
<dbReference type="PANTHER" id="PTHR42146:SF1">
    <property type="entry name" value="OLIGORIBONUCLEASE NRNB"/>
    <property type="match status" value="1"/>
</dbReference>
<dbReference type="SUPFAM" id="SSF64182">
    <property type="entry name" value="DHH phosphoesterases"/>
    <property type="match status" value="1"/>
</dbReference>
<evidence type="ECO:0000269" key="1">
    <source>
    </source>
</evidence>
<evidence type="ECO:0000305" key="2"/>
<comment type="function">
    <text evidence="1">Degrades RNA oligonucleotides with a length of 5 nucleotides in a 3'- to 5'-direction. Less active on shorter RNA oligonucleotides and on those with a length of 24 nucleotides. Prefers RNA oligonucleotides containing adenines rather than cytosines.</text>
</comment>
<comment type="cofactor">
    <cofactor evidence="1">
        <name>Mn(2+)</name>
        <dbReference type="ChEBI" id="CHEBI:29035"/>
    </cofactor>
    <cofactor evidence="1">
        <name>Co(2+)</name>
        <dbReference type="ChEBI" id="CHEBI:48828"/>
    </cofactor>
    <cofactor evidence="1">
        <name>Mg(2+)</name>
        <dbReference type="ChEBI" id="CHEBI:18420"/>
    </cofactor>
</comment>
<comment type="biophysicochemical properties">
    <phDependence>
        <text evidence="1">Optimum pH is 7.5-8.0.</text>
    </phDependence>
</comment>
<comment type="subcellular location">
    <subcellularLocation>
        <location evidence="2">Cytoplasm</location>
    </subcellularLocation>
</comment>
<comment type="disruption phenotype">
    <text evidence="1">No visible phenotype. Cells show normal growth.</text>
</comment>
<reference key="1">
    <citation type="journal article" date="1997" name="Nature">
        <title>The complete genome sequence of the Gram-positive bacterium Bacillus subtilis.</title>
        <authorList>
            <person name="Kunst F."/>
            <person name="Ogasawara N."/>
            <person name="Moszer I."/>
            <person name="Albertini A.M."/>
            <person name="Alloni G."/>
            <person name="Azevedo V."/>
            <person name="Bertero M.G."/>
            <person name="Bessieres P."/>
            <person name="Bolotin A."/>
            <person name="Borchert S."/>
            <person name="Borriss R."/>
            <person name="Boursier L."/>
            <person name="Brans A."/>
            <person name="Braun M."/>
            <person name="Brignell S.C."/>
            <person name="Bron S."/>
            <person name="Brouillet S."/>
            <person name="Bruschi C.V."/>
            <person name="Caldwell B."/>
            <person name="Capuano V."/>
            <person name="Carter N.M."/>
            <person name="Choi S.-K."/>
            <person name="Codani J.-J."/>
            <person name="Connerton I.F."/>
            <person name="Cummings N.J."/>
            <person name="Daniel R.A."/>
            <person name="Denizot F."/>
            <person name="Devine K.M."/>
            <person name="Duesterhoeft A."/>
            <person name="Ehrlich S.D."/>
            <person name="Emmerson P.T."/>
            <person name="Entian K.-D."/>
            <person name="Errington J."/>
            <person name="Fabret C."/>
            <person name="Ferrari E."/>
            <person name="Foulger D."/>
            <person name="Fritz C."/>
            <person name="Fujita M."/>
            <person name="Fujita Y."/>
            <person name="Fuma S."/>
            <person name="Galizzi A."/>
            <person name="Galleron N."/>
            <person name="Ghim S.-Y."/>
            <person name="Glaser P."/>
            <person name="Goffeau A."/>
            <person name="Golightly E.J."/>
            <person name="Grandi G."/>
            <person name="Guiseppi G."/>
            <person name="Guy B.J."/>
            <person name="Haga K."/>
            <person name="Haiech J."/>
            <person name="Harwood C.R."/>
            <person name="Henaut A."/>
            <person name="Hilbert H."/>
            <person name="Holsappel S."/>
            <person name="Hosono S."/>
            <person name="Hullo M.-F."/>
            <person name="Itaya M."/>
            <person name="Jones L.-M."/>
            <person name="Joris B."/>
            <person name="Karamata D."/>
            <person name="Kasahara Y."/>
            <person name="Klaerr-Blanchard M."/>
            <person name="Klein C."/>
            <person name="Kobayashi Y."/>
            <person name="Koetter P."/>
            <person name="Koningstein G."/>
            <person name="Krogh S."/>
            <person name="Kumano M."/>
            <person name="Kurita K."/>
            <person name="Lapidus A."/>
            <person name="Lardinois S."/>
            <person name="Lauber J."/>
            <person name="Lazarevic V."/>
            <person name="Lee S.-M."/>
            <person name="Levine A."/>
            <person name="Liu H."/>
            <person name="Masuda S."/>
            <person name="Mauel C."/>
            <person name="Medigue C."/>
            <person name="Medina N."/>
            <person name="Mellado R.P."/>
            <person name="Mizuno M."/>
            <person name="Moestl D."/>
            <person name="Nakai S."/>
            <person name="Noback M."/>
            <person name="Noone D."/>
            <person name="O'Reilly M."/>
            <person name="Ogawa K."/>
            <person name="Ogiwara A."/>
            <person name="Oudega B."/>
            <person name="Park S.-H."/>
            <person name="Parro V."/>
            <person name="Pohl T.M."/>
            <person name="Portetelle D."/>
            <person name="Porwollik S."/>
            <person name="Prescott A.M."/>
            <person name="Presecan E."/>
            <person name="Pujic P."/>
            <person name="Purnelle B."/>
            <person name="Rapoport G."/>
            <person name="Rey M."/>
            <person name="Reynolds S."/>
            <person name="Rieger M."/>
            <person name="Rivolta C."/>
            <person name="Rocha E."/>
            <person name="Roche B."/>
            <person name="Rose M."/>
            <person name="Sadaie Y."/>
            <person name="Sato T."/>
            <person name="Scanlan E."/>
            <person name="Schleich S."/>
            <person name="Schroeter R."/>
            <person name="Scoffone F."/>
            <person name="Sekiguchi J."/>
            <person name="Sekowska A."/>
            <person name="Seror S.J."/>
            <person name="Serror P."/>
            <person name="Shin B.-S."/>
            <person name="Soldo B."/>
            <person name="Sorokin A."/>
            <person name="Tacconi E."/>
            <person name="Takagi T."/>
            <person name="Takahashi H."/>
            <person name="Takemaru K."/>
            <person name="Takeuchi M."/>
            <person name="Tamakoshi A."/>
            <person name="Tanaka T."/>
            <person name="Terpstra P."/>
            <person name="Tognoni A."/>
            <person name="Tosato V."/>
            <person name="Uchiyama S."/>
            <person name="Vandenbol M."/>
            <person name="Vannier F."/>
            <person name="Vassarotti A."/>
            <person name="Viari A."/>
            <person name="Wambutt R."/>
            <person name="Wedler E."/>
            <person name="Wedler H."/>
            <person name="Weitzenegger T."/>
            <person name="Winters P."/>
            <person name="Wipat A."/>
            <person name="Yamamoto H."/>
            <person name="Yamane K."/>
            <person name="Yasumoto K."/>
            <person name="Yata K."/>
            <person name="Yoshida K."/>
            <person name="Yoshikawa H.-F."/>
            <person name="Zumstein E."/>
            <person name="Yoshikawa H."/>
            <person name="Danchin A."/>
        </authorList>
    </citation>
    <scope>NUCLEOTIDE SEQUENCE [LARGE SCALE GENOMIC DNA]</scope>
    <source>
        <strain>168</strain>
    </source>
</reference>
<reference key="2">
    <citation type="journal article" date="2009" name="Nucleic Acids Res.">
        <title>Degradation of nanoRNA is performed by multiple redundant RNases in Bacillus subtilis.</title>
        <authorList>
            <person name="Fang M."/>
            <person name="Zeisberg W.-M."/>
            <person name="Condon C."/>
            <person name="Ogryzko V."/>
            <person name="Danchin A."/>
            <person name="Mechold U."/>
        </authorList>
    </citation>
    <scope>FUNCTION</scope>
    <scope>COFACTOR</scope>
    <scope>BIOPHYSICOCHEMICAL PROPERTIES</scope>
    <scope>DISRUPTION PHENOTYPE</scope>
    <scope>MUTAGENESIS OF 86-ASP--HIS-88</scope>
    <source>
        <strain>168</strain>
    </source>
</reference>
<gene>
    <name type="primary">nrnB</name>
    <name type="synonym">yngD</name>
    <name type="ordered locus">BSU18200</name>
</gene>
<proteinExistence type="evidence at protein level"/>
<sequence>MYHLYSHNDLDGVGCGIVAKLAFGKDVEIRYNSVNGLNAQVQYFLEKAKESNRQDALFITDLAVNEENEERLNEYVHAGGKVKLIDHHKTALHLNEHEWGFVQVEYDDGRLTSATSLLYGYLIENGFMKPTNALDQFTELVRQYDTWEWERYDQKQAKRLNDLFFLLSIDEFEAKMIQRLSTHDEFFFDDFEEKLLDLEDEKIERYLRRKKREMVQTFVHEHCVGIVHAESYHSELGNRLGKDNPHLDYIAILSMGSKRVSLRTIHDYIDVSEIAGRYGGGGHAKASGCSITDEVYELFVAEAFRIDPVRPDAFRNIYNLKGSANGSLYENRAQMRFFLFPLDNEWNIQINGETQDETFAAFEEAEWFIKRNYAASLVRDEVFVAFLAENLKLANQHRK</sequence>
<name>NRNB_BACSU</name>
<protein>
    <recommendedName>
        <fullName>Oligoribonuclease NrnB</fullName>
        <ecNumber>3.1.-.-</ecNumber>
    </recommendedName>
    <alternativeName>
        <fullName>NanoRNase B</fullName>
    </alternativeName>
</protein>